<protein>
    <recommendedName>
        <fullName evidence="7">Conidiophore development regulator abaA</fullName>
    </recommendedName>
</protein>
<name>ABAA_PEND2</name>
<gene>
    <name evidence="6" type="primary">abaA</name>
    <name type="ORF">PDIG_51120</name>
</gene>
<sequence length="796" mass="88403">MATGWQPECLVTQNQSSLGPVEAHSDRALQNTTGNVQSYSDHLTHADIAAREDQLHQLGFKYPHAPHHPQPLSASGLDQQHVAARLHQRKLRRLHSVGPNSQSRRARSSYLKSQKYLEYRRRPRRDTGKDGEPVWSDELEDAFQQALEANPPMGRRKWSERGKSYGRNELIAEYIFKLTGKRRTRKQVSSHLQVLDSFLKGDPDWERLVREASPERSSSVHGSAPAPKWRTAVEHTSASSHYGSHTHGSYHDHMRSMQPYAGDLPPPHYTLGSNMQEAAASTIHGFNFDMWVTAPQQANRIGKALHTYTRLQGDLHHSAASSMPLEHVNGWRSSFPQLASMVDDINNPMDCDIILLEVNLELMTDFPPARSQLGIQLDLDFGHPSAGDVFGVSQMDNWTCSTHIYEDGQKLIESHDDLPKTQSTKVKPLFESSWWAKMFTKVTQDKRMAEDSGNPQVAREADDNTRNFFRSLSAVQELRATSPSSHRLSNQYQGHHGDESKRMAVLVWKFRQTRPGQVGTTTWRRLIPAPDRTSNNSPLAVSGIDLPPLSLDSILLNKASHQGMYQTPQPHDLIPHPSQSHSQWSLYHPPHDNVANLFNPSGHLDFLASISKAEDTINDKIAVTSVLDSFSTSLAPESIPSTSLHGPSGAPVMLNVHDLPLSHPGIGYAMGHEASHYVPSHQHSVNMHDSNGVLHSFFGSNMQPLDDLSHSHASWGAHSTSIPGDVGAGSYHLSYHPEHHGHGPVSRESQQPHHFDSLLPSEDLMDKIVGRMSNGASMHGAGPDAAGYDNSTVDSV</sequence>
<reference key="1">
    <citation type="journal article" date="2012" name="BMC Genomics">
        <title>Genome sequence of the necrotrophic fungus Penicillium digitatum, the main postharvest pathogen of citrus.</title>
        <authorList>
            <person name="Marcet-Houben M."/>
            <person name="Ballester A.-R."/>
            <person name="de la Fuente B."/>
            <person name="Harries E."/>
            <person name="Marcos J.F."/>
            <person name="Gonzalez-Candelas L."/>
            <person name="Gabaldon T."/>
        </authorList>
    </citation>
    <scope>NUCLEOTIDE SEQUENCE [LARGE SCALE GENOMIC DNA]</scope>
    <source>
        <strain>PHI26 / CECT 20796</strain>
    </source>
</reference>
<reference key="2">
    <citation type="journal article" date="2015" name="Res. Microbiol.">
        <title>PdbrlA, PdabaA and PdwetA control distinct stages of conidiogenesis in Penicillium digitatum.</title>
        <authorList>
            <person name="Wang M."/>
            <person name="Sun X."/>
            <person name="Zhu C."/>
            <person name="Xu Q."/>
            <person name="Ruan R."/>
            <person name="Yu D."/>
            <person name="Li H."/>
        </authorList>
    </citation>
    <scope>FUNCTION</scope>
    <scope>DISRUPTION PHENOTYPE</scope>
</reference>
<feature type="chain" id="PRO_0000435938" description="Conidiophore development regulator abaA">
    <location>
        <begin position="1"/>
        <end position="796"/>
    </location>
</feature>
<feature type="DNA-binding region" description="TEA" evidence="3">
    <location>
        <begin position="128"/>
        <end position="202"/>
    </location>
</feature>
<feature type="region of interest" description="Disordered" evidence="4">
    <location>
        <begin position="61"/>
        <end position="135"/>
    </location>
</feature>
<feature type="region of interest" description="Disordered" evidence="4">
    <location>
        <begin position="210"/>
        <end position="261"/>
    </location>
</feature>
<feature type="region of interest" description="Disordered" evidence="4">
    <location>
        <begin position="446"/>
        <end position="465"/>
    </location>
</feature>
<feature type="region of interest" description="Disordered" evidence="4">
    <location>
        <begin position="728"/>
        <end position="757"/>
    </location>
</feature>
<feature type="region of interest" description="Disordered" evidence="4">
    <location>
        <begin position="775"/>
        <end position="796"/>
    </location>
</feature>
<feature type="compositionally biased region" description="Basic residues" evidence="4">
    <location>
        <begin position="84"/>
        <end position="95"/>
    </location>
</feature>
<feature type="compositionally biased region" description="Basic and acidic residues" evidence="4">
    <location>
        <begin position="115"/>
        <end position="132"/>
    </location>
</feature>
<feature type="compositionally biased region" description="Low complexity" evidence="4">
    <location>
        <begin position="235"/>
        <end position="247"/>
    </location>
</feature>
<dbReference type="EMBL" id="AKCT01000207">
    <property type="protein sequence ID" value="EKV11276.1"/>
    <property type="molecule type" value="Genomic_DNA"/>
</dbReference>
<dbReference type="SMR" id="K9GDC6"/>
<dbReference type="STRING" id="1170229.K9GDC6"/>
<dbReference type="eggNOG" id="KOG3841">
    <property type="taxonomic scope" value="Eukaryota"/>
</dbReference>
<dbReference type="HOGENOM" id="CLU_356362_0_0_1"/>
<dbReference type="InParanoid" id="K9GDC6"/>
<dbReference type="OMA" id="MWVSAPQ"/>
<dbReference type="OrthoDB" id="23336at5073"/>
<dbReference type="Proteomes" id="UP000009882">
    <property type="component" value="Unassembled WGS sequence"/>
</dbReference>
<dbReference type="GO" id="GO:0005634">
    <property type="term" value="C:nucleus"/>
    <property type="evidence" value="ECO:0007669"/>
    <property type="project" value="UniProtKB-SubCell"/>
</dbReference>
<dbReference type="GO" id="GO:0005667">
    <property type="term" value="C:transcription regulator complex"/>
    <property type="evidence" value="ECO:0007669"/>
    <property type="project" value="TreeGrafter"/>
</dbReference>
<dbReference type="GO" id="GO:0000981">
    <property type="term" value="F:DNA-binding transcription factor activity, RNA polymerase II-specific"/>
    <property type="evidence" value="ECO:0007669"/>
    <property type="project" value="TreeGrafter"/>
</dbReference>
<dbReference type="GO" id="GO:0000978">
    <property type="term" value="F:RNA polymerase II cis-regulatory region sequence-specific DNA binding"/>
    <property type="evidence" value="ECO:0007669"/>
    <property type="project" value="TreeGrafter"/>
</dbReference>
<dbReference type="GO" id="GO:0048315">
    <property type="term" value="P:conidium formation"/>
    <property type="evidence" value="ECO:0007669"/>
    <property type="project" value="UniProtKB-KW"/>
</dbReference>
<dbReference type="GO" id="GO:0030435">
    <property type="term" value="P:sporulation resulting in formation of a cellular spore"/>
    <property type="evidence" value="ECO:0007669"/>
    <property type="project" value="UniProtKB-KW"/>
</dbReference>
<dbReference type="Gene3D" id="6.10.20.40">
    <property type="entry name" value="TEA/ATTS domain"/>
    <property type="match status" value="1"/>
</dbReference>
<dbReference type="InterPro" id="IPR000818">
    <property type="entry name" value="TEA/ATTS_dom"/>
</dbReference>
<dbReference type="InterPro" id="IPR038096">
    <property type="entry name" value="TEA/ATTS_sf"/>
</dbReference>
<dbReference type="InterPro" id="IPR050937">
    <property type="entry name" value="TEC1_TEAD_TF"/>
</dbReference>
<dbReference type="PANTHER" id="PTHR11834:SF0">
    <property type="entry name" value="PROTEIN SCALLOPED"/>
    <property type="match status" value="1"/>
</dbReference>
<dbReference type="PANTHER" id="PTHR11834">
    <property type="entry name" value="TRANSCRIPTIONAL ENHANCER FACTOR TEF RELATED"/>
    <property type="match status" value="1"/>
</dbReference>
<dbReference type="Pfam" id="PF01285">
    <property type="entry name" value="TEA"/>
    <property type="match status" value="1"/>
</dbReference>
<dbReference type="PRINTS" id="PR00065">
    <property type="entry name" value="TEADOMAIN"/>
</dbReference>
<dbReference type="SMART" id="SM00426">
    <property type="entry name" value="TEA"/>
    <property type="match status" value="1"/>
</dbReference>
<dbReference type="PROSITE" id="PS00554">
    <property type="entry name" value="TEA_1"/>
    <property type="match status" value="1"/>
</dbReference>
<dbReference type="PROSITE" id="PS51088">
    <property type="entry name" value="TEA_2"/>
    <property type="match status" value="1"/>
</dbReference>
<accession>K9GDC6</accession>
<keyword id="KW-0010">Activator</keyword>
<keyword id="KW-0183">Conidiation</keyword>
<keyword id="KW-0539">Nucleus</keyword>
<keyword id="KW-1185">Reference proteome</keyword>
<keyword id="KW-0749">Sporulation</keyword>
<keyword id="KW-0804">Transcription</keyword>
<keyword id="KW-0805">Transcription regulation</keyword>
<proteinExistence type="inferred from homology"/>
<evidence type="ECO:0000250" key="1">
    <source>
        <dbReference type="UniProtKB" id="I1S4T3"/>
    </source>
</evidence>
<evidence type="ECO:0000250" key="2">
    <source>
        <dbReference type="UniProtKB" id="P22022"/>
    </source>
</evidence>
<evidence type="ECO:0000255" key="3">
    <source>
        <dbReference type="PROSITE-ProRule" id="PRU00505"/>
    </source>
</evidence>
<evidence type="ECO:0000256" key="4">
    <source>
        <dbReference type="SAM" id="MobiDB-lite"/>
    </source>
</evidence>
<evidence type="ECO:0000269" key="5">
    <source>
    </source>
</evidence>
<evidence type="ECO:0000303" key="6">
    <source>
    </source>
</evidence>
<evidence type="ECO:0000305" key="7"/>
<organism>
    <name type="scientific">Penicillium digitatum (strain PHI26 / CECT 20796)</name>
    <name type="common">Green mold</name>
    <dbReference type="NCBI Taxonomy" id="1170229"/>
    <lineage>
        <taxon>Eukaryota</taxon>
        <taxon>Fungi</taxon>
        <taxon>Dikarya</taxon>
        <taxon>Ascomycota</taxon>
        <taxon>Pezizomycotina</taxon>
        <taxon>Eurotiomycetes</taxon>
        <taxon>Eurotiomycetidae</taxon>
        <taxon>Eurotiales</taxon>
        <taxon>Aspergillaceae</taxon>
        <taxon>Penicillium</taxon>
    </lineage>
</organism>
<comment type="function">
    <text evidence="2 5">BrlA, abaA and wetA are pivotal regulators of conidiophore development and conidium maturation (By similarity). They act individually and together to regulate their own expression and that of numerous other sporulation-specific genes (By similarity). Binds to the sequence 5'-CATTCY-3', where Y is a pyrimidine, making both major- and minor-groove contacts (By similarity). Plays an essential role in the differentiation and functionality of phialides (PubMed:25530311).</text>
</comment>
<comment type="subcellular location">
    <subcellularLocation>
        <location evidence="1">Nucleus</location>
    </subcellularLocation>
    <text evidence="1">localizes to the nuclei of phialides and terminal cells of mature conidia (By similarity).</text>
</comment>
<comment type="disruption phenotype">
    <text evidence="5">completely abolishes conidia formation and leads to the formation of compact white colonies (PubMed:25530311). Produces extremely elongated and immature phialides with defective morphology (PubMed:25530311).</text>
</comment>
<comment type="similarity">
    <text evidence="7">Belongs to the TEC1 family.</text>
</comment>